<comment type="sequence caution" evidence="3">
    <conflict type="miscellaneous discrepancy">
        <sequence resource="EMBL-CDS" id="AAH54081"/>
    </conflict>
    <text>Possible contaminating sequence. The N-terminal 4 residues do not match the underlying genomic sequence.</text>
</comment>
<name>R12BA_MOUSE</name>
<protein>
    <recommendedName>
        <fullName>RNA-binding protein 12B-A</fullName>
    </recommendedName>
    <alternativeName>
        <fullName>RNA-binding motif protein 12B-A</fullName>
    </alternativeName>
</protein>
<sequence length="836" mass="96596">MAVVIRLLGLPFIAGPVDIRHFFKGLTIPDGGVHIIGGKVGEAFIIFATDEDARRAISRSGGFIKDSSVELFLSSKVEMQKTIEMKRTARVGRGRPGSGASGVGNVYHFSDALKEEESYSGYGSSVNRDAGFHTNGTGLDLRPRKTRPLKAENPYLFLRGLPYLVNEDDVRVFFSGLCVDGVILLKHHDGRNNGDAIVKFASCVDASGGLKCHRSFMGSRFIEVMQGSEQQWIEFGGTATEGGDTPRMRSEEHSPSRRINGRHFRKRSHSKSPRARSRSPLGFYVHLKNLSLNTNKRDLRNLFRDTDLTNDQIKFVYKDERRTRYAFVMFKNQKDYNTALGLHKTVLQYRPVLIDPVSRKEMVRIIECYEKKRPESLEKERPGRVSQKYSQEGFSGSGQKLCIYIRNLPFDVTKGEVQKFFADFSLVEDDIYLLCDDKGVGLGEALVRFKSEEQAMKAERLNRQRFLGIEVLLRLISEEQMQEFGVKSSWLSNERTQACSRSHDGDDCSCLFDLKDPSSCSFGQSESLRYHPKDLRKMGHFKHPQGYFRQSDRRSPEDFRHSPEDYRHPWEEHTSHSREEDWRLPLEDWKWSQEDDFRQCHEKDRRQLRSPWEEDFRRPSQEHFRRSYQEHIRQPPEEHFRRSREEDFRHVADEDFRQASDEDFRTSQEDLRYPTDEDFRRVSVEDLREVPEKDLRLPKNFRSPGEEFWTPPDFRGQHPFGNFDHLQGGKFDFEKYKFGSFPDAKVTSDLNLNCVSDKIIPVKISNLPFKANASEILDFFHGYKVIPDSVSLQYNEQGLPIGEAIVAMTNYNEALAAVKDLSGRPVGPRKVKLSLL</sequence>
<feature type="chain" id="PRO_0000273368" description="RNA-binding protein 12B-A">
    <location>
        <begin position="1"/>
        <end position="836"/>
    </location>
</feature>
<feature type="domain" description="RRM 1" evidence="1">
    <location>
        <begin position="154"/>
        <end position="229"/>
    </location>
</feature>
<feature type="domain" description="RRM 2" evidence="1">
    <location>
        <begin position="283"/>
        <end position="359"/>
    </location>
</feature>
<feature type="domain" description="RRM 3" evidence="1">
    <location>
        <begin position="401"/>
        <end position="478"/>
    </location>
</feature>
<feature type="domain" description="RRM 4" evidence="1">
    <location>
        <begin position="760"/>
        <end position="836"/>
    </location>
</feature>
<feature type="region of interest" description="Disordered" evidence="2">
    <location>
        <begin position="237"/>
        <end position="277"/>
    </location>
</feature>
<feature type="region of interest" description="Disordered" evidence="2">
    <location>
        <begin position="539"/>
        <end position="572"/>
    </location>
</feature>
<feature type="region of interest" description="Disordered" evidence="2">
    <location>
        <begin position="620"/>
        <end position="644"/>
    </location>
</feature>
<feature type="compositionally biased region" description="Basic and acidic residues" evidence="2">
    <location>
        <begin position="244"/>
        <end position="255"/>
    </location>
</feature>
<feature type="compositionally biased region" description="Basic residues" evidence="2">
    <location>
        <begin position="259"/>
        <end position="277"/>
    </location>
</feature>
<feature type="compositionally biased region" description="Basic and acidic residues" evidence="2">
    <location>
        <begin position="550"/>
        <end position="572"/>
    </location>
</feature>
<feature type="modified residue" description="Phosphoserine" evidence="4">
    <location>
        <position position="703"/>
    </location>
</feature>
<feature type="modified residue" description="N6-acetyllysine" evidence="5">
    <location>
        <position position="758"/>
    </location>
</feature>
<feature type="sequence conflict" description="In Ref. 2; AAH50844." evidence="3" ref="2">
    <original>S</original>
    <variation>P</variation>
    <location>
        <position position="592"/>
    </location>
</feature>
<feature type="sequence conflict" description="In Ref. 2; AAH50844." evidence="3" ref="2">
    <original>R</original>
    <variation>H</variation>
    <location>
        <position position="605"/>
    </location>
</feature>
<feature type="sequence conflict" description="In Ref. 2; AAH50844." evidence="3" ref="2">
    <original>E</original>
    <variation>Q</variation>
    <location>
        <position position="637"/>
    </location>
</feature>
<keyword id="KW-0007">Acetylation</keyword>
<keyword id="KW-0597">Phosphoprotein</keyword>
<keyword id="KW-1185">Reference proteome</keyword>
<keyword id="KW-0677">Repeat</keyword>
<keyword id="KW-0694">RNA-binding</keyword>
<organism>
    <name type="scientific">Mus musculus</name>
    <name type="common">Mouse</name>
    <dbReference type="NCBI Taxonomy" id="10090"/>
    <lineage>
        <taxon>Eukaryota</taxon>
        <taxon>Metazoa</taxon>
        <taxon>Chordata</taxon>
        <taxon>Craniata</taxon>
        <taxon>Vertebrata</taxon>
        <taxon>Euteleostomi</taxon>
        <taxon>Mammalia</taxon>
        <taxon>Eutheria</taxon>
        <taxon>Euarchontoglires</taxon>
        <taxon>Glires</taxon>
        <taxon>Rodentia</taxon>
        <taxon>Myomorpha</taxon>
        <taxon>Muroidea</taxon>
        <taxon>Muridae</taxon>
        <taxon>Murinae</taxon>
        <taxon>Mus</taxon>
        <taxon>Mus</taxon>
    </lineage>
</organism>
<evidence type="ECO:0000255" key="1">
    <source>
        <dbReference type="PROSITE-ProRule" id="PRU00176"/>
    </source>
</evidence>
<evidence type="ECO:0000256" key="2">
    <source>
        <dbReference type="SAM" id="MobiDB-lite"/>
    </source>
</evidence>
<evidence type="ECO:0000305" key="3"/>
<evidence type="ECO:0007744" key="4">
    <source>
    </source>
</evidence>
<evidence type="ECO:0007744" key="5">
    <source>
    </source>
</evidence>
<gene>
    <name type="primary">Rbm12b1</name>
    <name type="synonym">Rbm12b</name>
    <name type="synonym">Rbm12ba</name>
</gene>
<accession>Q80YR9</accession>
<accession>B1AZ74</accession>
<accession>Q7TQK7</accession>
<accession>Q8CD70</accession>
<accession>Q9CRY6</accession>
<proteinExistence type="evidence at protein level"/>
<reference key="1">
    <citation type="journal article" date="2009" name="PLoS Biol.">
        <title>Lineage-specific biology revealed by a finished genome assembly of the mouse.</title>
        <authorList>
            <person name="Church D.M."/>
            <person name="Goodstadt L."/>
            <person name="Hillier L.W."/>
            <person name="Zody M.C."/>
            <person name="Goldstein S."/>
            <person name="She X."/>
            <person name="Bult C.J."/>
            <person name="Agarwala R."/>
            <person name="Cherry J.L."/>
            <person name="DiCuccio M."/>
            <person name="Hlavina W."/>
            <person name="Kapustin Y."/>
            <person name="Meric P."/>
            <person name="Maglott D."/>
            <person name="Birtle Z."/>
            <person name="Marques A.C."/>
            <person name="Graves T."/>
            <person name="Zhou S."/>
            <person name="Teague B."/>
            <person name="Potamousis K."/>
            <person name="Churas C."/>
            <person name="Place M."/>
            <person name="Herschleb J."/>
            <person name="Runnheim R."/>
            <person name="Forrest D."/>
            <person name="Amos-Landgraf J."/>
            <person name="Schwartz D.C."/>
            <person name="Cheng Z."/>
            <person name="Lindblad-Toh K."/>
            <person name="Eichler E.E."/>
            <person name="Ponting C.P."/>
        </authorList>
    </citation>
    <scope>NUCLEOTIDE SEQUENCE [LARGE SCALE GENOMIC DNA]</scope>
    <source>
        <strain>C57BL/6J</strain>
    </source>
</reference>
<reference key="2">
    <citation type="journal article" date="2005" name="Science">
        <title>The transcriptional landscape of the mammalian genome.</title>
        <authorList>
            <person name="Carninci P."/>
            <person name="Kasukawa T."/>
            <person name="Katayama S."/>
            <person name="Gough J."/>
            <person name="Frith M.C."/>
            <person name="Maeda N."/>
            <person name="Oyama R."/>
            <person name="Ravasi T."/>
            <person name="Lenhard B."/>
            <person name="Wells C."/>
            <person name="Kodzius R."/>
            <person name="Shimokawa K."/>
            <person name="Bajic V.B."/>
            <person name="Brenner S.E."/>
            <person name="Batalov S."/>
            <person name="Forrest A.R."/>
            <person name="Zavolan M."/>
            <person name="Davis M.J."/>
            <person name="Wilming L.G."/>
            <person name="Aidinis V."/>
            <person name="Allen J.E."/>
            <person name="Ambesi-Impiombato A."/>
            <person name="Apweiler R."/>
            <person name="Aturaliya R.N."/>
            <person name="Bailey T.L."/>
            <person name="Bansal M."/>
            <person name="Baxter L."/>
            <person name="Beisel K.W."/>
            <person name="Bersano T."/>
            <person name="Bono H."/>
            <person name="Chalk A.M."/>
            <person name="Chiu K.P."/>
            <person name="Choudhary V."/>
            <person name="Christoffels A."/>
            <person name="Clutterbuck D.R."/>
            <person name="Crowe M.L."/>
            <person name="Dalla E."/>
            <person name="Dalrymple B.P."/>
            <person name="de Bono B."/>
            <person name="Della Gatta G."/>
            <person name="di Bernardo D."/>
            <person name="Down T."/>
            <person name="Engstrom P."/>
            <person name="Fagiolini M."/>
            <person name="Faulkner G."/>
            <person name="Fletcher C.F."/>
            <person name="Fukushima T."/>
            <person name="Furuno M."/>
            <person name="Futaki S."/>
            <person name="Gariboldi M."/>
            <person name="Georgii-Hemming P."/>
            <person name="Gingeras T.R."/>
            <person name="Gojobori T."/>
            <person name="Green R.E."/>
            <person name="Gustincich S."/>
            <person name="Harbers M."/>
            <person name="Hayashi Y."/>
            <person name="Hensch T.K."/>
            <person name="Hirokawa N."/>
            <person name="Hill D."/>
            <person name="Huminiecki L."/>
            <person name="Iacono M."/>
            <person name="Ikeo K."/>
            <person name="Iwama A."/>
            <person name="Ishikawa T."/>
            <person name="Jakt M."/>
            <person name="Kanapin A."/>
            <person name="Katoh M."/>
            <person name="Kawasawa Y."/>
            <person name="Kelso J."/>
            <person name="Kitamura H."/>
            <person name="Kitano H."/>
            <person name="Kollias G."/>
            <person name="Krishnan S.P."/>
            <person name="Kruger A."/>
            <person name="Kummerfeld S.K."/>
            <person name="Kurochkin I.V."/>
            <person name="Lareau L.F."/>
            <person name="Lazarevic D."/>
            <person name="Lipovich L."/>
            <person name="Liu J."/>
            <person name="Liuni S."/>
            <person name="McWilliam S."/>
            <person name="Madan Babu M."/>
            <person name="Madera M."/>
            <person name="Marchionni L."/>
            <person name="Matsuda H."/>
            <person name="Matsuzawa S."/>
            <person name="Miki H."/>
            <person name="Mignone F."/>
            <person name="Miyake S."/>
            <person name="Morris K."/>
            <person name="Mottagui-Tabar S."/>
            <person name="Mulder N."/>
            <person name="Nakano N."/>
            <person name="Nakauchi H."/>
            <person name="Ng P."/>
            <person name="Nilsson R."/>
            <person name="Nishiguchi S."/>
            <person name="Nishikawa S."/>
            <person name="Nori F."/>
            <person name="Ohara O."/>
            <person name="Okazaki Y."/>
            <person name="Orlando V."/>
            <person name="Pang K.C."/>
            <person name="Pavan W.J."/>
            <person name="Pavesi G."/>
            <person name="Pesole G."/>
            <person name="Petrovsky N."/>
            <person name="Piazza S."/>
            <person name="Reed J."/>
            <person name="Reid J.F."/>
            <person name="Ring B.Z."/>
            <person name="Ringwald M."/>
            <person name="Rost B."/>
            <person name="Ruan Y."/>
            <person name="Salzberg S.L."/>
            <person name="Sandelin A."/>
            <person name="Schneider C."/>
            <person name="Schoenbach C."/>
            <person name="Sekiguchi K."/>
            <person name="Semple C.A."/>
            <person name="Seno S."/>
            <person name="Sessa L."/>
            <person name="Sheng Y."/>
            <person name="Shibata Y."/>
            <person name="Shimada H."/>
            <person name="Shimada K."/>
            <person name="Silva D."/>
            <person name="Sinclair B."/>
            <person name="Sperling S."/>
            <person name="Stupka E."/>
            <person name="Sugiura K."/>
            <person name="Sultana R."/>
            <person name="Takenaka Y."/>
            <person name="Taki K."/>
            <person name="Tammoja K."/>
            <person name="Tan S.L."/>
            <person name="Tang S."/>
            <person name="Taylor M.S."/>
            <person name="Tegner J."/>
            <person name="Teichmann S.A."/>
            <person name="Ueda H.R."/>
            <person name="van Nimwegen E."/>
            <person name="Verardo R."/>
            <person name="Wei C.L."/>
            <person name="Yagi K."/>
            <person name="Yamanishi H."/>
            <person name="Zabarovsky E."/>
            <person name="Zhu S."/>
            <person name="Zimmer A."/>
            <person name="Hide W."/>
            <person name="Bult C."/>
            <person name="Grimmond S.M."/>
            <person name="Teasdale R.D."/>
            <person name="Liu E.T."/>
            <person name="Brusic V."/>
            <person name="Quackenbush J."/>
            <person name="Wahlestedt C."/>
            <person name="Mattick J.S."/>
            <person name="Hume D.A."/>
            <person name="Kai C."/>
            <person name="Sasaki D."/>
            <person name="Tomaru Y."/>
            <person name="Fukuda S."/>
            <person name="Kanamori-Katayama M."/>
            <person name="Suzuki M."/>
            <person name="Aoki J."/>
            <person name="Arakawa T."/>
            <person name="Iida J."/>
            <person name="Imamura K."/>
            <person name="Itoh M."/>
            <person name="Kato T."/>
            <person name="Kawaji H."/>
            <person name="Kawagashira N."/>
            <person name="Kawashima T."/>
            <person name="Kojima M."/>
            <person name="Kondo S."/>
            <person name="Konno H."/>
            <person name="Nakano K."/>
            <person name="Ninomiya N."/>
            <person name="Nishio T."/>
            <person name="Okada M."/>
            <person name="Plessy C."/>
            <person name="Shibata K."/>
            <person name="Shiraki T."/>
            <person name="Suzuki S."/>
            <person name="Tagami M."/>
            <person name="Waki K."/>
            <person name="Watahiki A."/>
            <person name="Okamura-Oho Y."/>
            <person name="Suzuki H."/>
            <person name="Kawai J."/>
            <person name="Hayashizaki Y."/>
        </authorList>
    </citation>
    <scope>NUCLEOTIDE SEQUENCE [LARGE SCALE MRNA] OF 1-82 AND 114-836</scope>
    <source>
        <strain>C57BL/6J</strain>
        <tissue>Head</tissue>
        <tissue>Testis</tissue>
    </source>
</reference>
<reference key="3">
    <citation type="journal article" date="2004" name="Genome Res.">
        <title>The status, quality, and expansion of the NIH full-length cDNA project: the Mammalian Gene Collection (MGC).</title>
        <authorList>
            <consortium name="The MGC Project Team"/>
        </authorList>
    </citation>
    <scope>NUCLEOTIDE SEQUENCE [LARGE SCALE MRNA] OF 239-836</scope>
    <source>
        <tissue>Limb</tissue>
        <tissue>Olfactory epithelium</tissue>
    </source>
</reference>
<reference key="4">
    <citation type="journal article" date="2010" name="Cell">
        <title>A tissue-specific atlas of mouse protein phosphorylation and expression.</title>
        <authorList>
            <person name="Huttlin E.L."/>
            <person name="Jedrychowski M.P."/>
            <person name="Elias J.E."/>
            <person name="Goswami T."/>
            <person name="Rad R."/>
            <person name="Beausoleil S.A."/>
            <person name="Villen J."/>
            <person name="Haas W."/>
            <person name="Sowa M.E."/>
            <person name="Gygi S.P."/>
        </authorList>
    </citation>
    <scope>PHOSPHORYLATION [LARGE SCALE ANALYSIS] AT SER-703</scope>
    <scope>IDENTIFICATION BY MASS SPECTROMETRY [LARGE SCALE ANALYSIS]</scope>
    <source>
        <tissue>Testis</tissue>
    </source>
</reference>
<reference key="5">
    <citation type="journal article" date="2013" name="Mol. Cell">
        <title>SIRT5-mediated lysine desuccinylation impacts diverse metabolic pathways.</title>
        <authorList>
            <person name="Park J."/>
            <person name="Chen Y."/>
            <person name="Tishkoff D.X."/>
            <person name="Peng C."/>
            <person name="Tan M."/>
            <person name="Dai L."/>
            <person name="Xie Z."/>
            <person name="Zhang Y."/>
            <person name="Zwaans B.M."/>
            <person name="Skinner M.E."/>
            <person name="Lombard D.B."/>
            <person name="Zhao Y."/>
        </authorList>
    </citation>
    <scope>ACETYLATION [LARGE SCALE ANALYSIS] AT LYS-758</scope>
    <scope>IDENTIFICATION BY MASS SPECTROMETRY [LARGE SCALE ANALYSIS]</scope>
    <source>
        <tissue>Embryonic fibroblast</tissue>
    </source>
</reference>
<dbReference type="EMBL" id="AL929413">
    <property type="status" value="NOT_ANNOTATED_CDS"/>
    <property type="molecule type" value="Genomic_DNA"/>
</dbReference>
<dbReference type="EMBL" id="AK013872">
    <property type="protein sequence ID" value="BAB29027.1"/>
    <property type="molecule type" value="mRNA"/>
</dbReference>
<dbReference type="EMBL" id="AK031339">
    <property type="protein sequence ID" value="BAC27354.1"/>
    <property type="molecule type" value="mRNA"/>
</dbReference>
<dbReference type="EMBL" id="BC050844">
    <property type="protein sequence ID" value="AAH50844.1"/>
    <property type="molecule type" value="mRNA"/>
</dbReference>
<dbReference type="EMBL" id="BC054081">
    <property type="protein sequence ID" value="AAH54081.1"/>
    <property type="status" value="ALT_SEQ"/>
    <property type="molecule type" value="mRNA"/>
</dbReference>
<dbReference type="CCDS" id="CCDS17976.1"/>
<dbReference type="RefSeq" id="NP_082502.2">
    <property type="nucleotide sequence ID" value="NM_028226.2"/>
</dbReference>
<dbReference type="RefSeq" id="XP_006538334.1">
    <property type="nucleotide sequence ID" value="XM_006538271.4"/>
</dbReference>
<dbReference type="RefSeq" id="XP_006538335.1">
    <property type="nucleotide sequence ID" value="XM_006538272.4"/>
</dbReference>
<dbReference type="RefSeq" id="XP_006538336.1">
    <property type="nucleotide sequence ID" value="XM_006538273.4"/>
</dbReference>
<dbReference type="RefSeq" id="XP_006538337.1">
    <property type="nucleotide sequence ID" value="XM_006538274.2"/>
</dbReference>
<dbReference type="RefSeq" id="XP_030109670.1">
    <property type="nucleotide sequence ID" value="XM_030253810.1"/>
</dbReference>
<dbReference type="RefSeq" id="XP_036020349.1">
    <property type="nucleotide sequence ID" value="XM_036164456.1"/>
</dbReference>
<dbReference type="RefSeq" id="XP_036020350.1">
    <property type="nucleotide sequence ID" value="XM_036164457.1"/>
</dbReference>
<dbReference type="FunCoup" id="Q80YR9">
    <property type="interactions" value="2888"/>
</dbReference>
<dbReference type="STRING" id="10090.ENSMUSP00000064195"/>
<dbReference type="iPTMnet" id="Q80YR9"/>
<dbReference type="PhosphoSitePlus" id="Q80YR9"/>
<dbReference type="SwissPalm" id="Q80YR9"/>
<dbReference type="jPOST" id="Q80YR9"/>
<dbReference type="PaxDb" id="10090-ENSMUSP00000064195"/>
<dbReference type="PeptideAtlas" id="Q80YR9"/>
<dbReference type="ProteomicsDB" id="300221"/>
<dbReference type="Pumba" id="Q80YR9"/>
<dbReference type="DNASU" id="72397"/>
<dbReference type="Ensembl" id="ENSMUST00000050069.9">
    <property type="protein sequence ID" value="ENSMUSP00000053555.3"/>
    <property type="gene ID" value="ENSMUSG00000046667.15"/>
</dbReference>
<dbReference type="Ensembl" id="ENSMUST00000069128.8">
    <property type="protein sequence ID" value="ENSMUSP00000064195.8"/>
    <property type="gene ID" value="ENSMUSG00000046667.15"/>
</dbReference>
<dbReference type="GeneID" id="72397"/>
<dbReference type="KEGG" id="mmu:72397"/>
<dbReference type="UCSC" id="uc008san.3">
    <property type="organism name" value="mouse"/>
</dbReference>
<dbReference type="AGR" id="MGI:1919647"/>
<dbReference type="CTD" id="72397"/>
<dbReference type="MGI" id="MGI:1919647">
    <property type="gene designation" value="Rbm12b1"/>
</dbReference>
<dbReference type="VEuPathDB" id="HostDB:ENSMUSG00000046667"/>
<dbReference type="eggNOG" id="KOG4307">
    <property type="taxonomic scope" value="Eukaryota"/>
</dbReference>
<dbReference type="GeneTree" id="ENSGT00940000158322"/>
<dbReference type="HOGENOM" id="CLU_004368_1_0_1"/>
<dbReference type="InParanoid" id="Q80YR9"/>
<dbReference type="OMA" id="FRHPPDR"/>
<dbReference type="OrthoDB" id="2588702at2759"/>
<dbReference type="PhylomeDB" id="Q80YR9"/>
<dbReference type="TreeFam" id="TF331899"/>
<dbReference type="BioGRID-ORCS" id="72397">
    <property type="hits" value="2 hits in 79 CRISPR screens"/>
</dbReference>
<dbReference type="ChiTaRS" id="Rbm12b1">
    <property type="organism name" value="mouse"/>
</dbReference>
<dbReference type="PRO" id="PR:Q80YR9"/>
<dbReference type="Proteomes" id="UP000000589">
    <property type="component" value="Chromosome 4"/>
</dbReference>
<dbReference type="RNAct" id="Q80YR9">
    <property type="molecule type" value="protein"/>
</dbReference>
<dbReference type="Bgee" id="ENSMUSG00000046667">
    <property type="expression patterns" value="Expressed in embryonic post-anal tail and 226 other cell types or tissues"/>
</dbReference>
<dbReference type="GO" id="GO:0003723">
    <property type="term" value="F:RNA binding"/>
    <property type="evidence" value="ECO:0007669"/>
    <property type="project" value="UniProtKB-KW"/>
</dbReference>
<dbReference type="CDD" id="cd12746">
    <property type="entry name" value="RRM2_RBM12B"/>
    <property type="match status" value="1"/>
</dbReference>
<dbReference type="CDD" id="cd12748">
    <property type="entry name" value="RRM4_RBM12B"/>
    <property type="match status" value="1"/>
</dbReference>
<dbReference type="FunFam" id="3.30.70.330:FF:000193">
    <property type="entry name" value="RNA-binding motif protein 12"/>
    <property type="match status" value="1"/>
</dbReference>
<dbReference type="Gene3D" id="3.30.70.330">
    <property type="match status" value="5"/>
</dbReference>
<dbReference type="InterPro" id="IPR050666">
    <property type="entry name" value="ESRP"/>
</dbReference>
<dbReference type="InterPro" id="IPR012677">
    <property type="entry name" value="Nucleotide-bd_a/b_plait_sf"/>
</dbReference>
<dbReference type="InterPro" id="IPR035979">
    <property type="entry name" value="RBD_domain_sf"/>
</dbReference>
<dbReference type="InterPro" id="IPR034588">
    <property type="entry name" value="RBM12B_RRM2"/>
</dbReference>
<dbReference type="InterPro" id="IPR047188">
    <property type="entry name" value="RRM4_RBM12B"/>
</dbReference>
<dbReference type="InterPro" id="IPR000504">
    <property type="entry name" value="RRM_dom"/>
</dbReference>
<dbReference type="PANTHER" id="PTHR13976">
    <property type="entry name" value="HETEROGENEOUS NUCLEAR RIBONUCLEOPROTEIN-RELATED"/>
    <property type="match status" value="1"/>
</dbReference>
<dbReference type="Pfam" id="PF00076">
    <property type="entry name" value="RRM_1"/>
    <property type="match status" value="3"/>
</dbReference>
<dbReference type="SMART" id="SM00360">
    <property type="entry name" value="RRM"/>
    <property type="match status" value="5"/>
</dbReference>
<dbReference type="SUPFAM" id="SSF54928">
    <property type="entry name" value="RNA-binding domain, RBD"/>
    <property type="match status" value="4"/>
</dbReference>
<dbReference type="PROSITE" id="PS50102">
    <property type="entry name" value="RRM"/>
    <property type="match status" value="4"/>
</dbReference>